<comment type="function">
    <text evidence="1">Catalyzes the synthesis of the hydroxymethylpyrimidine phosphate (HMP-P) moiety of thiamine from aminoimidazole ribotide (AIR) in a radical S-adenosyl-L-methionine (SAM)-dependent reaction.</text>
</comment>
<comment type="catalytic activity">
    <reaction evidence="1">
        <text>5-amino-1-(5-phospho-beta-D-ribosyl)imidazole + S-adenosyl-L-methionine = 4-amino-2-methyl-5-(phosphooxymethyl)pyrimidine + CO + 5'-deoxyadenosine + formate + L-methionine + 3 H(+)</text>
        <dbReference type="Rhea" id="RHEA:24840"/>
        <dbReference type="ChEBI" id="CHEBI:15378"/>
        <dbReference type="ChEBI" id="CHEBI:15740"/>
        <dbReference type="ChEBI" id="CHEBI:17245"/>
        <dbReference type="ChEBI" id="CHEBI:17319"/>
        <dbReference type="ChEBI" id="CHEBI:57844"/>
        <dbReference type="ChEBI" id="CHEBI:58354"/>
        <dbReference type="ChEBI" id="CHEBI:59789"/>
        <dbReference type="ChEBI" id="CHEBI:137981"/>
        <dbReference type="EC" id="4.1.99.17"/>
    </reaction>
</comment>
<comment type="cofactor">
    <cofactor evidence="1">
        <name>[4Fe-4S] cluster</name>
        <dbReference type="ChEBI" id="CHEBI:49883"/>
    </cofactor>
    <text evidence="1">Binds 1 [4Fe-4S] cluster per subunit. The cluster is coordinated with 3 cysteines and an exchangeable S-adenosyl-L-methionine.</text>
</comment>
<comment type="pathway">
    <text evidence="1">Cofactor biosynthesis; thiamine diphosphate biosynthesis.</text>
</comment>
<comment type="subunit">
    <text evidence="1">Homodimer.</text>
</comment>
<comment type="similarity">
    <text evidence="1">Belongs to the ThiC family.</text>
</comment>
<keyword id="KW-0004">4Fe-4S</keyword>
<keyword id="KW-0408">Iron</keyword>
<keyword id="KW-0411">Iron-sulfur</keyword>
<keyword id="KW-0456">Lyase</keyword>
<keyword id="KW-0479">Metal-binding</keyword>
<keyword id="KW-1185">Reference proteome</keyword>
<keyword id="KW-0949">S-adenosyl-L-methionine</keyword>
<keyword id="KW-0784">Thiamine biosynthesis</keyword>
<keyword id="KW-0862">Zinc</keyword>
<reference key="1">
    <citation type="submission" date="2005-08" db="EMBL/GenBank/DDBJ databases">
        <title>Complete sequence of chromosome 1 of Nitrosospira multiformis ATCC 25196.</title>
        <authorList>
            <person name="Copeland A."/>
            <person name="Lucas S."/>
            <person name="Lapidus A."/>
            <person name="Barry K."/>
            <person name="Detter J.C."/>
            <person name="Glavina T."/>
            <person name="Hammon N."/>
            <person name="Israni S."/>
            <person name="Pitluck S."/>
            <person name="Chain P."/>
            <person name="Malfatti S."/>
            <person name="Shin M."/>
            <person name="Vergez L."/>
            <person name="Schmutz J."/>
            <person name="Larimer F."/>
            <person name="Land M."/>
            <person name="Hauser L."/>
            <person name="Kyrpides N."/>
            <person name="Lykidis A."/>
            <person name="Richardson P."/>
        </authorList>
    </citation>
    <scope>NUCLEOTIDE SEQUENCE [LARGE SCALE GENOMIC DNA]</scope>
    <source>
        <strain>ATCC 25196 / NCIMB 11849 / C 71</strain>
    </source>
</reference>
<protein>
    <recommendedName>
        <fullName evidence="1">Phosphomethylpyrimidine synthase</fullName>
        <ecNumber evidence="1">4.1.99.17</ecNumber>
    </recommendedName>
    <alternativeName>
        <fullName evidence="1">Hydroxymethylpyrimidine phosphate synthase</fullName>
        <shortName evidence="1">HMP-P synthase</shortName>
        <shortName evidence="1">HMP-phosphate synthase</shortName>
        <shortName evidence="1">HMPP synthase</shortName>
    </alternativeName>
    <alternativeName>
        <fullName evidence="1">Thiamine biosynthesis protein ThiC</fullName>
    </alternativeName>
</protein>
<evidence type="ECO:0000255" key="1">
    <source>
        <dbReference type="HAMAP-Rule" id="MF_00089"/>
    </source>
</evidence>
<evidence type="ECO:0000256" key="2">
    <source>
        <dbReference type="SAM" id="MobiDB-lite"/>
    </source>
</evidence>
<proteinExistence type="inferred from homology"/>
<gene>
    <name evidence="1" type="primary">thiC</name>
    <name type="ordered locus">Nmul_A2285</name>
</gene>
<dbReference type="EC" id="4.1.99.17" evidence="1"/>
<dbReference type="EMBL" id="CP000103">
    <property type="protein sequence ID" value="ABB75577.1"/>
    <property type="molecule type" value="Genomic_DNA"/>
</dbReference>
<dbReference type="RefSeq" id="WP_011381583.1">
    <property type="nucleotide sequence ID" value="NC_007614.1"/>
</dbReference>
<dbReference type="SMR" id="Q2Y6P4"/>
<dbReference type="STRING" id="323848.Nmul_A2285"/>
<dbReference type="KEGG" id="nmu:Nmul_A2285"/>
<dbReference type="eggNOG" id="COG0422">
    <property type="taxonomic scope" value="Bacteria"/>
</dbReference>
<dbReference type="HOGENOM" id="CLU_013181_2_1_4"/>
<dbReference type="OrthoDB" id="9805897at2"/>
<dbReference type="UniPathway" id="UPA00060"/>
<dbReference type="Proteomes" id="UP000002718">
    <property type="component" value="Chromosome"/>
</dbReference>
<dbReference type="GO" id="GO:0005829">
    <property type="term" value="C:cytosol"/>
    <property type="evidence" value="ECO:0007669"/>
    <property type="project" value="TreeGrafter"/>
</dbReference>
<dbReference type="GO" id="GO:0051539">
    <property type="term" value="F:4 iron, 4 sulfur cluster binding"/>
    <property type="evidence" value="ECO:0007669"/>
    <property type="project" value="UniProtKB-KW"/>
</dbReference>
<dbReference type="GO" id="GO:0016830">
    <property type="term" value="F:carbon-carbon lyase activity"/>
    <property type="evidence" value="ECO:0007669"/>
    <property type="project" value="InterPro"/>
</dbReference>
<dbReference type="GO" id="GO:0008270">
    <property type="term" value="F:zinc ion binding"/>
    <property type="evidence" value="ECO:0007669"/>
    <property type="project" value="UniProtKB-UniRule"/>
</dbReference>
<dbReference type="GO" id="GO:0009228">
    <property type="term" value="P:thiamine biosynthetic process"/>
    <property type="evidence" value="ECO:0007669"/>
    <property type="project" value="UniProtKB-KW"/>
</dbReference>
<dbReference type="GO" id="GO:0009229">
    <property type="term" value="P:thiamine diphosphate biosynthetic process"/>
    <property type="evidence" value="ECO:0007669"/>
    <property type="project" value="UniProtKB-UniRule"/>
</dbReference>
<dbReference type="FunFam" id="3.20.20.540:FF:000001">
    <property type="entry name" value="Phosphomethylpyrimidine synthase"/>
    <property type="match status" value="1"/>
</dbReference>
<dbReference type="Gene3D" id="6.10.250.620">
    <property type="match status" value="1"/>
</dbReference>
<dbReference type="Gene3D" id="3.20.20.540">
    <property type="entry name" value="Radical SAM ThiC family, central domain"/>
    <property type="match status" value="1"/>
</dbReference>
<dbReference type="HAMAP" id="MF_00089">
    <property type="entry name" value="ThiC"/>
    <property type="match status" value="1"/>
</dbReference>
<dbReference type="InterPro" id="IPR037509">
    <property type="entry name" value="ThiC"/>
</dbReference>
<dbReference type="InterPro" id="IPR025747">
    <property type="entry name" value="ThiC-associated_dom"/>
</dbReference>
<dbReference type="InterPro" id="IPR038521">
    <property type="entry name" value="ThiC/Bza_core_dom"/>
</dbReference>
<dbReference type="InterPro" id="IPR002817">
    <property type="entry name" value="ThiC/BzaA/B"/>
</dbReference>
<dbReference type="NCBIfam" id="NF006763">
    <property type="entry name" value="PRK09284.1"/>
    <property type="match status" value="1"/>
</dbReference>
<dbReference type="NCBIfam" id="NF009895">
    <property type="entry name" value="PRK13352.1"/>
    <property type="match status" value="1"/>
</dbReference>
<dbReference type="NCBIfam" id="TIGR00190">
    <property type="entry name" value="thiC"/>
    <property type="match status" value="1"/>
</dbReference>
<dbReference type="PANTHER" id="PTHR30557:SF1">
    <property type="entry name" value="PHOSPHOMETHYLPYRIMIDINE SYNTHASE, CHLOROPLASTIC"/>
    <property type="match status" value="1"/>
</dbReference>
<dbReference type="PANTHER" id="PTHR30557">
    <property type="entry name" value="THIAMINE BIOSYNTHESIS PROTEIN THIC"/>
    <property type="match status" value="1"/>
</dbReference>
<dbReference type="Pfam" id="PF13667">
    <property type="entry name" value="ThiC-associated"/>
    <property type="match status" value="1"/>
</dbReference>
<dbReference type="Pfam" id="PF01964">
    <property type="entry name" value="ThiC_Rad_SAM"/>
    <property type="match status" value="1"/>
</dbReference>
<dbReference type="SFLD" id="SFLDF00407">
    <property type="entry name" value="phosphomethylpyrimidine_syntha"/>
    <property type="match status" value="1"/>
</dbReference>
<dbReference type="SFLD" id="SFLDG01114">
    <property type="entry name" value="phosphomethylpyrimidine_syntha"/>
    <property type="match status" value="1"/>
</dbReference>
<dbReference type="SFLD" id="SFLDS00113">
    <property type="entry name" value="Radical_SAM_Phosphomethylpyrim"/>
    <property type="match status" value="1"/>
</dbReference>
<feature type="chain" id="PRO_0000242278" description="Phosphomethylpyrimidine synthase">
    <location>
        <begin position="1"/>
        <end position="635"/>
    </location>
</feature>
<feature type="region of interest" description="Disordered" evidence="2">
    <location>
        <begin position="1"/>
        <end position="41"/>
    </location>
</feature>
<feature type="compositionally biased region" description="Polar residues" evidence="2">
    <location>
        <begin position="1"/>
        <end position="14"/>
    </location>
</feature>
<feature type="binding site" evidence="1">
    <location>
        <position position="240"/>
    </location>
    <ligand>
        <name>substrate</name>
    </ligand>
</feature>
<feature type="binding site" evidence="1">
    <location>
        <position position="269"/>
    </location>
    <ligand>
        <name>substrate</name>
    </ligand>
</feature>
<feature type="binding site" evidence="1">
    <location>
        <position position="298"/>
    </location>
    <ligand>
        <name>substrate</name>
    </ligand>
</feature>
<feature type="binding site" evidence="1">
    <location>
        <position position="334"/>
    </location>
    <ligand>
        <name>substrate</name>
    </ligand>
</feature>
<feature type="binding site" evidence="1">
    <location>
        <begin position="354"/>
        <end position="356"/>
    </location>
    <ligand>
        <name>substrate</name>
    </ligand>
</feature>
<feature type="binding site" evidence="1">
    <location>
        <begin position="395"/>
        <end position="398"/>
    </location>
    <ligand>
        <name>substrate</name>
    </ligand>
</feature>
<feature type="binding site" evidence="1">
    <location>
        <position position="434"/>
    </location>
    <ligand>
        <name>substrate</name>
    </ligand>
</feature>
<feature type="binding site" evidence="1">
    <location>
        <position position="438"/>
    </location>
    <ligand>
        <name>Zn(2+)</name>
        <dbReference type="ChEBI" id="CHEBI:29105"/>
    </ligand>
</feature>
<feature type="binding site" evidence="1">
    <location>
        <position position="461"/>
    </location>
    <ligand>
        <name>substrate</name>
    </ligand>
</feature>
<feature type="binding site" evidence="1">
    <location>
        <position position="502"/>
    </location>
    <ligand>
        <name>Zn(2+)</name>
        <dbReference type="ChEBI" id="CHEBI:29105"/>
    </ligand>
</feature>
<feature type="binding site" evidence="1">
    <location>
        <position position="582"/>
    </location>
    <ligand>
        <name>[4Fe-4S] cluster</name>
        <dbReference type="ChEBI" id="CHEBI:49883"/>
        <note>4Fe-4S-S-AdoMet</note>
    </ligand>
</feature>
<feature type="binding site" evidence="1">
    <location>
        <position position="585"/>
    </location>
    <ligand>
        <name>[4Fe-4S] cluster</name>
        <dbReference type="ChEBI" id="CHEBI:49883"/>
        <note>4Fe-4S-S-AdoMet</note>
    </ligand>
</feature>
<feature type="binding site" evidence="1">
    <location>
        <position position="590"/>
    </location>
    <ligand>
        <name>[4Fe-4S] cluster</name>
        <dbReference type="ChEBI" id="CHEBI:49883"/>
        <note>4Fe-4S-S-AdoMet</note>
    </ligand>
</feature>
<sequence length="635" mass="70808">MNATVSSAVQSSLPFSGKTAQVDEGTVKPLPRSQKTYLSGSRPDIRVPMREISQSDTPASMGAEKNPPIYVYDTSGPYTDPAIKIDIRAGLAPLREKWIDERGDTEILSGPASIYGRQRLNDPRLAELRFDLKRSPRRARAGANVTQMHYARGGIVTPEMEFIAIRENQRCEHLADQQREMLARQHPGQDFGAFLPRHITPEFVRDEVARGRAIIPANINHPESEPMIIGRNFLVKINANIGNSALSSSIQEEVEKMTWAIRWGGDTVMDLSTGKNIHETREWIIRNSPVPIGTVPIYQALEKVNGKAEDLTWEIFRDTLIEQAEQGVDYFTIHAGVRLAYVPMTAKRLTGIVSRGGSIMAKWCLAHHKESFLYTQFEEICEIMKAYDVSFSLGDGLRPGSIYDANDEAQFAELKTLGELTQIAWKHDVQVMIEGPGHVPMHLIKENMDMQLKYCAEAPFYTLGPLTTDIAPGYDHITSAIGAAMIGWYGTAMLCYVTPKEHLGLPDKDDVKDGIITYKIAAHAADLAKGHPGAQLRDNALSKARFEFRWEDQFNLGLDPDKARQFHDETLPQEGAKLAHFCSMCGPHFCSMKITQDVRDFAASKGVSDQEALEKGMEEKASEFVARGTEIYSKV</sequence>
<accession>Q2Y6P4</accession>
<name>THIC_NITMU</name>
<organism>
    <name type="scientific">Nitrosospira multiformis (strain ATCC 25196 / NCIMB 11849 / C 71)</name>
    <dbReference type="NCBI Taxonomy" id="323848"/>
    <lineage>
        <taxon>Bacteria</taxon>
        <taxon>Pseudomonadati</taxon>
        <taxon>Pseudomonadota</taxon>
        <taxon>Betaproteobacteria</taxon>
        <taxon>Nitrosomonadales</taxon>
        <taxon>Nitrosomonadaceae</taxon>
        <taxon>Nitrosospira</taxon>
    </lineage>
</organism>